<feature type="chain" id="PRO_1000116502" description="Phospho-N-acetylmuramoyl-pentapeptide-transferase">
    <location>
        <begin position="1"/>
        <end position="324"/>
    </location>
</feature>
<feature type="transmembrane region" description="Helical" evidence="1">
    <location>
        <begin position="5"/>
        <end position="25"/>
    </location>
</feature>
<feature type="transmembrane region" description="Helical" evidence="1">
    <location>
        <begin position="55"/>
        <end position="75"/>
    </location>
</feature>
<feature type="transmembrane region" description="Helical" evidence="1">
    <location>
        <begin position="81"/>
        <end position="101"/>
    </location>
</feature>
<feature type="transmembrane region" description="Helical" evidence="1">
    <location>
        <begin position="122"/>
        <end position="142"/>
    </location>
</feature>
<feature type="transmembrane region" description="Helical" evidence="1">
    <location>
        <begin position="147"/>
        <end position="167"/>
    </location>
</feature>
<feature type="transmembrane region" description="Helical" evidence="1">
    <location>
        <begin position="176"/>
        <end position="196"/>
    </location>
</feature>
<feature type="transmembrane region" description="Helical" evidence="1">
    <location>
        <begin position="203"/>
        <end position="223"/>
    </location>
</feature>
<feature type="transmembrane region" description="Helical" evidence="1">
    <location>
        <begin position="227"/>
        <end position="247"/>
    </location>
</feature>
<feature type="transmembrane region" description="Helical" evidence="1">
    <location>
        <begin position="250"/>
        <end position="270"/>
    </location>
</feature>
<feature type="transmembrane region" description="Helical" evidence="1">
    <location>
        <begin position="302"/>
        <end position="322"/>
    </location>
</feature>
<reference key="1">
    <citation type="journal article" date="2008" name="Genome Biol.">
        <title>Encapsulated in silica: genome, proteome and physiology of the thermophilic bacterium Anoxybacillus flavithermus WK1.</title>
        <authorList>
            <person name="Saw J.H."/>
            <person name="Mountain B.W."/>
            <person name="Feng L."/>
            <person name="Omelchenko M.V."/>
            <person name="Hou S."/>
            <person name="Saito J.A."/>
            <person name="Stott M.B."/>
            <person name="Li D."/>
            <person name="Zhao G."/>
            <person name="Wu J."/>
            <person name="Galperin M.Y."/>
            <person name="Koonin E.V."/>
            <person name="Makarova K.S."/>
            <person name="Wolf Y.I."/>
            <person name="Rigden D.J."/>
            <person name="Dunfield P.F."/>
            <person name="Wang L."/>
            <person name="Alam M."/>
        </authorList>
    </citation>
    <scope>NUCLEOTIDE SEQUENCE [LARGE SCALE GENOMIC DNA]</scope>
    <source>
        <strain>DSM 21510 / WK1</strain>
    </source>
</reference>
<protein>
    <recommendedName>
        <fullName evidence="1">Phospho-N-acetylmuramoyl-pentapeptide-transferase</fullName>
        <ecNumber evidence="1">2.7.8.13</ecNumber>
    </recommendedName>
    <alternativeName>
        <fullName evidence="1">UDP-MurNAc-pentapeptide phosphotransferase</fullName>
    </alternativeName>
</protein>
<keyword id="KW-0131">Cell cycle</keyword>
<keyword id="KW-0132">Cell division</keyword>
<keyword id="KW-1003">Cell membrane</keyword>
<keyword id="KW-0133">Cell shape</keyword>
<keyword id="KW-0961">Cell wall biogenesis/degradation</keyword>
<keyword id="KW-0460">Magnesium</keyword>
<keyword id="KW-0472">Membrane</keyword>
<keyword id="KW-0479">Metal-binding</keyword>
<keyword id="KW-0573">Peptidoglycan synthesis</keyword>
<keyword id="KW-0808">Transferase</keyword>
<keyword id="KW-0812">Transmembrane</keyword>
<keyword id="KW-1133">Transmembrane helix</keyword>
<proteinExistence type="inferred from homology"/>
<organism>
    <name type="scientific">Anoxybacillus flavithermus (strain DSM 21510 / WK1)</name>
    <dbReference type="NCBI Taxonomy" id="491915"/>
    <lineage>
        <taxon>Bacteria</taxon>
        <taxon>Bacillati</taxon>
        <taxon>Bacillota</taxon>
        <taxon>Bacilli</taxon>
        <taxon>Bacillales</taxon>
        <taxon>Anoxybacillaceae</taxon>
        <taxon>Anoxybacillus</taxon>
    </lineage>
</organism>
<gene>
    <name evidence="1" type="primary">mraY</name>
    <name type="ordered locus">Aflv_1833</name>
</gene>
<name>MRAY_ANOFW</name>
<comment type="function">
    <text evidence="1">Catalyzes the initial step of the lipid cycle reactions in the biosynthesis of the cell wall peptidoglycan: transfers peptidoglycan precursor phospho-MurNAc-pentapeptide from UDP-MurNAc-pentapeptide onto the lipid carrier undecaprenyl phosphate, yielding undecaprenyl-pyrophosphoryl-MurNAc-pentapeptide, known as lipid I.</text>
</comment>
<comment type="catalytic activity">
    <reaction evidence="1">
        <text>UDP-N-acetyl-alpha-D-muramoyl-L-alanyl-gamma-D-glutamyl-meso-2,6-diaminopimeloyl-D-alanyl-D-alanine + di-trans,octa-cis-undecaprenyl phosphate = di-trans,octa-cis-undecaprenyl diphospho-N-acetyl-alpha-D-muramoyl-L-alanyl-D-glutamyl-meso-2,6-diaminopimeloyl-D-alanyl-D-alanine + UMP</text>
        <dbReference type="Rhea" id="RHEA:28386"/>
        <dbReference type="ChEBI" id="CHEBI:57865"/>
        <dbReference type="ChEBI" id="CHEBI:60392"/>
        <dbReference type="ChEBI" id="CHEBI:61386"/>
        <dbReference type="ChEBI" id="CHEBI:61387"/>
        <dbReference type="EC" id="2.7.8.13"/>
    </reaction>
</comment>
<comment type="cofactor">
    <cofactor evidence="1">
        <name>Mg(2+)</name>
        <dbReference type="ChEBI" id="CHEBI:18420"/>
    </cofactor>
</comment>
<comment type="pathway">
    <text evidence="1">Cell wall biogenesis; peptidoglycan biosynthesis.</text>
</comment>
<comment type="subcellular location">
    <subcellularLocation>
        <location evidence="1">Cell membrane</location>
        <topology evidence="1">Multi-pass membrane protein</topology>
    </subcellularLocation>
</comment>
<comment type="similarity">
    <text evidence="1">Belongs to the glycosyltransferase 4 family. MraY subfamily.</text>
</comment>
<sequence length="324" mass="35437">MNEKVILFTAGLAFIITVVLSPIFIPFLRRLKFGQSIREEGPKSHQKKSGTPTMGGLMILLSLSITTWLMSDIFFERTAHTYMLLFVTVGYGLLGFIDDFIKVVMKRNLGLTSKQKLAGQLLIALIFYFFFQHYSMSTVVSIPGTDVSLDLGVAYVLLIIFMLVGGSNAVNLTDGLDGLLAGTAAIAFGAYAVLAWNQGQYDVAIFSVAVVGAVLGFLVFNAHPAKVFMGDTGSLALGGAIVTIAILTKLEILLVIIGGVFVIETLSVIIQVISFKTTGKRVFRMSPLHHHYELIGWSEWRVVVTFWAVGLLFAILGIYIEVWV</sequence>
<accession>B7GGI5</accession>
<evidence type="ECO:0000255" key="1">
    <source>
        <dbReference type="HAMAP-Rule" id="MF_00038"/>
    </source>
</evidence>
<dbReference type="EC" id="2.7.8.13" evidence="1"/>
<dbReference type="EMBL" id="CP000922">
    <property type="protein sequence ID" value="ACJ34194.1"/>
    <property type="molecule type" value="Genomic_DNA"/>
</dbReference>
<dbReference type="RefSeq" id="WP_012575392.1">
    <property type="nucleotide sequence ID" value="NC_011567.1"/>
</dbReference>
<dbReference type="SMR" id="B7GGI5"/>
<dbReference type="STRING" id="491915.Aflv_1833"/>
<dbReference type="GeneID" id="7038086"/>
<dbReference type="KEGG" id="afl:Aflv_1833"/>
<dbReference type="PATRIC" id="fig|491915.6.peg.1885"/>
<dbReference type="eggNOG" id="COG0472">
    <property type="taxonomic scope" value="Bacteria"/>
</dbReference>
<dbReference type="HOGENOM" id="CLU_023982_0_1_9"/>
<dbReference type="UniPathway" id="UPA00219"/>
<dbReference type="Proteomes" id="UP000000742">
    <property type="component" value="Chromosome"/>
</dbReference>
<dbReference type="GO" id="GO:0005886">
    <property type="term" value="C:plasma membrane"/>
    <property type="evidence" value="ECO:0007669"/>
    <property type="project" value="UniProtKB-SubCell"/>
</dbReference>
<dbReference type="GO" id="GO:0046872">
    <property type="term" value="F:metal ion binding"/>
    <property type="evidence" value="ECO:0007669"/>
    <property type="project" value="UniProtKB-KW"/>
</dbReference>
<dbReference type="GO" id="GO:0008963">
    <property type="term" value="F:phospho-N-acetylmuramoyl-pentapeptide-transferase activity"/>
    <property type="evidence" value="ECO:0007669"/>
    <property type="project" value="UniProtKB-UniRule"/>
</dbReference>
<dbReference type="GO" id="GO:0051992">
    <property type="term" value="F:UDP-N-acetylmuramoyl-L-alanyl-D-glutamyl-meso-2,6-diaminopimelyl-D-alanyl-D-alanine:undecaprenyl-phosphate transferase activity"/>
    <property type="evidence" value="ECO:0007669"/>
    <property type="project" value="RHEA"/>
</dbReference>
<dbReference type="GO" id="GO:0051301">
    <property type="term" value="P:cell division"/>
    <property type="evidence" value="ECO:0007669"/>
    <property type="project" value="UniProtKB-KW"/>
</dbReference>
<dbReference type="GO" id="GO:0071555">
    <property type="term" value="P:cell wall organization"/>
    <property type="evidence" value="ECO:0007669"/>
    <property type="project" value="UniProtKB-KW"/>
</dbReference>
<dbReference type="GO" id="GO:0009252">
    <property type="term" value="P:peptidoglycan biosynthetic process"/>
    <property type="evidence" value="ECO:0007669"/>
    <property type="project" value="UniProtKB-UniRule"/>
</dbReference>
<dbReference type="GO" id="GO:0008360">
    <property type="term" value="P:regulation of cell shape"/>
    <property type="evidence" value="ECO:0007669"/>
    <property type="project" value="UniProtKB-KW"/>
</dbReference>
<dbReference type="CDD" id="cd06852">
    <property type="entry name" value="GT_MraY"/>
    <property type="match status" value="1"/>
</dbReference>
<dbReference type="HAMAP" id="MF_00038">
    <property type="entry name" value="MraY"/>
    <property type="match status" value="1"/>
</dbReference>
<dbReference type="InterPro" id="IPR000715">
    <property type="entry name" value="Glycosyl_transferase_4"/>
</dbReference>
<dbReference type="InterPro" id="IPR003524">
    <property type="entry name" value="PNAcMuramoyl-5peptid_Trfase"/>
</dbReference>
<dbReference type="InterPro" id="IPR018480">
    <property type="entry name" value="PNAcMuramoyl-5peptid_Trfase_CS"/>
</dbReference>
<dbReference type="NCBIfam" id="TIGR00445">
    <property type="entry name" value="mraY"/>
    <property type="match status" value="1"/>
</dbReference>
<dbReference type="PANTHER" id="PTHR22926">
    <property type="entry name" value="PHOSPHO-N-ACETYLMURAMOYL-PENTAPEPTIDE-TRANSFERASE"/>
    <property type="match status" value="1"/>
</dbReference>
<dbReference type="PANTHER" id="PTHR22926:SF5">
    <property type="entry name" value="PHOSPHO-N-ACETYLMURAMOYL-PENTAPEPTIDE-TRANSFERASE HOMOLOG"/>
    <property type="match status" value="1"/>
</dbReference>
<dbReference type="Pfam" id="PF00953">
    <property type="entry name" value="Glycos_transf_4"/>
    <property type="match status" value="1"/>
</dbReference>
<dbReference type="Pfam" id="PF10555">
    <property type="entry name" value="MraY_sig1"/>
    <property type="match status" value="1"/>
</dbReference>
<dbReference type="PROSITE" id="PS01347">
    <property type="entry name" value="MRAY_1"/>
    <property type="match status" value="1"/>
</dbReference>
<dbReference type="PROSITE" id="PS01348">
    <property type="entry name" value="MRAY_2"/>
    <property type="match status" value="1"/>
</dbReference>